<organism>
    <name type="scientific">Variola virus (isolate Human/India/Ind3/1967)</name>
    <name type="common">VARV</name>
    <name type="synonym">Smallpox virus</name>
    <dbReference type="NCBI Taxonomy" id="587200"/>
    <lineage>
        <taxon>Viruses</taxon>
        <taxon>Varidnaviria</taxon>
        <taxon>Bamfordvirae</taxon>
        <taxon>Nucleocytoviricota</taxon>
        <taxon>Pokkesviricetes</taxon>
        <taxon>Chitovirales</taxon>
        <taxon>Poxviridae</taxon>
        <taxon>Chordopoxvirinae</taxon>
        <taxon>Orthopoxvirus</taxon>
        <taxon>Variola virus</taxon>
    </lineage>
</organism>
<organismHost>
    <name type="scientific">Homo sapiens</name>
    <name type="common">Human</name>
    <dbReference type="NCBI Taxonomy" id="9606"/>
</organismHost>
<comment type="function">
    <text evidence="1">Regulatory subunit of the mRNA cap enzyme which stabilizes the catalytic subunit and enhances its methyltransferase activity through an allosteric mechanism. Heterodimeric mRNA capping enzyme catalyzes the linkage of a N7-methyl-guanosine moiety to the first transcribed nucleotide (cap 0 structure), whereas the methyltransferase OPG102 is responsible for a second methylation at the 2'-O position of the ribose (cap 1 structure). Also involved in early viral gene transcription termination and intermediate viral gene transcription initiation. Early gene transcription termination requires the termination factor VTF, the DNA-dependent ATPase NPH-I/OPG123 and the RAP94/OPG109 subunit of the viral RNA polymerase, as well as the presence of a specific termination motif. Binds, together with RAP94/OPG109, to the termination motif 5'-UUUUUNU-3' in the nascent early mRNA.</text>
</comment>
<comment type="subunit">
    <text evidence="1">Interacts with the catalytic subunit OPG113.</text>
</comment>
<comment type="subcellular location">
    <subcellularLocation>
        <location evidence="1">Virion</location>
    </subcellularLocation>
    <text evidence="1">All the enzymes and other proteins required to synthesize early mRNAs are packaged within the virion core along with the DNA genome.</text>
</comment>
<comment type="similarity">
    <text evidence="2">Belongs to the orthopoxvirus mRNA-capping enzyme regulatory subunit family.</text>
</comment>
<name>MCES_VAR67</name>
<feature type="chain" id="PRO_0000210138" description="mRNA-capping enzyme regulatory subunit OPG124">
    <location>
        <begin position="1"/>
        <end position="287"/>
    </location>
</feature>
<reference key="1">
    <citation type="journal article" date="1993" name="FEBS Lett.">
        <title>Genes of variola and vaccinia viruses necessary to overcome the host protective mechanisms.</title>
        <authorList>
            <person name="Shchelkunov S.N."/>
            <person name="Blinov V.M."/>
            <person name="Sandakhchiev L.S."/>
        </authorList>
    </citation>
    <scope>NUCLEOTIDE SEQUENCE [LARGE SCALE GENOMIC DNA]</scope>
</reference>
<proteinExistence type="inferred from homology"/>
<gene>
    <name type="primary">OPG124</name>
    <name type="ORF">D12L</name>
    <name type="ORF">N2L</name>
</gene>
<protein>
    <recommendedName>
        <fullName>mRNA-capping enzyme regulatory subunit OPG124</fullName>
    </recommendedName>
    <alternativeName>
        <fullName>Virus termination factor small subunit</fullName>
        <shortName>VTF small subunit</shortName>
    </alternativeName>
    <alternativeName>
        <fullName>mRNA-capping enzyme 33 kDa subunit</fullName>
    </alternativeName>
    <alternativeName>
        <fullName>mRNA-capping enzyme D12 subunit</fullName>
    </alternativeName>
    <alternativeName>
        <fullName>mRNA-capping enzyme small subunit</fullName>
    </alternativeName>
</protein>
<accession>P0DSQ5</accession>
<accession>P33808</accession>
<evidence type="ECO:0000250" key="1">
    <source>
        <dbReference type="UniProtKB" id="P04318"/>
    </source>
</evidence>
<evidence type="ECO:0000305" key="2"/>
<sequence length="287" mass="33352">MDEIVKNIREGTHVLLPFYETLPELNLSLGKSPLPSLEYGANYFLQISRVNDLNRMPTDMLKLFTHDIMLPESDLDKVYEILKINSVKYYGRSTKADAVVADLSARNKLFKRERDAIKSNNHLTENNLYISDYKMLTFDVFRPLFDFVNEKYCIIKLPTLFGRGVIDTMRIYCSLFKNVRLLKCVSDSWLKDSAIMVASNVCKKNLDLFMSHVKSVTKSSSWKDVNSVQFSILNDPVDTEFINKFLEFSNRVYEALYYVHSLLYSSMTSDSKSIENKHQRRLVKLLL</sequence>
<dbReference type="EMBL" id="X69198">
    <property type="protein sequence ID" value="CAA49043.1"/>
    <property type="molecule type" value="Genomic_DNA"/>
</dbReference>
<dbReference type="PIR" id="I36847">
    <property type="entry name" value="I36847"/>
</dbReference>
<dbReference type="RefSeq" id="NP_042146.1">
    <property type="nucleotide sequence ID" value="NC_001611.1"/>
</dbReference>
<dbReference type="SMR" id="P0DSQ5"/>
<dbReference type="GeneID" id="1486476"/>
<dbReference type="KEGG" id="vg:1486476"/>
<dbReference type="Proteomes" id="UP000002060">
    <property type="component" value="Segment"/>
</dbReference>
<dbReference type="GO" id="GO:0044423">
    <property type="term" value="C:virion component"/>
    <property type="evidence" value="ECO:0007669"/>
    <property type="project" value="UniProtKB-KW"/>
</dbReference>
<dbReference type="GO" id="GO:0004482">
    <property type="term" value="F:mRNA 5'-cap (guanine-N7-)-methyltransferase activity"/>
    <property type="evidence" value="ECO:0007669"/>
    <property type="project" value="InterPro"/>
</dbReference>
<dbReference type="GO" id="GO:0006353">
    <property type="term" value="P:DNA-templated transcription termination"/>
    <property type="evidence" value="ECO:0007669"/>
    <property type="project" value="UniProtKB-KW"/>
</dbReference>
<dbReference type="Gene3D" id="3.40.50.11680">
    <property type="entry name" value="Poxvirus mRNA capping enzyme, small subunit"/>
    <property type="match status" value="1"/>
</dbReference>
<dbReference type="InterPro" id="IPR005009">
    <property type="entry name" value="Poxvirus_mRNA-cap_ssu"/>
</dbReference>
<dbReference type="InterPro" id="IPR043096">
    <property type="entry name" value="Poxvirus_mRNA-cap_ssu_sf"/>
</dbReference>
<dbReference type="Pfam" id="PF03341">
    <property type="entry name" value="Pox_mRNA-cap"/>
    <property type="match status" value="1"/>
</dbReference>
<keyword id="KW-0506">mRNA capping</keyword>
<keyword id="KW-0507">mRNA processing</keyword>
<keyword id="KW-1185">Reference proteome</keyword>
<keyword id="KW-0804">Transcription</keyword>
<keyword id="KW-0805">Transcription regulation</keyword>
<keyword id="KW-0806">Transcription termination</keyword>
<keyword id="KW-0946">Virion</keyword>